<proteinExistence type="evidence at transcript level"/>
<keyword id="KW-0479">Metal-binding</keyword>
<keyword id="KW-0500">Molybdenum</keyword>
<keyword id="KW-0520">NAD</keyword>
<keyword id="KW-0560">Oxidoreductase</keyword>
<keyword id="KW-0659">Purine metabolism</keyword>
<keyword id="KW-1185">Reference proteome</keyword>
<gene>
    <name type="primary">pucD</name>
    <name type="synonym">yurC</name>
    <name type="ordered locus">BSU32480</name>
</gene>
<accession>O32144</accession>
<comment type="function">
    <text evidence="3">Oxidizes hypoxanthine and xanthine to uric acid.</text>
</comment>
<comment type="catalytic activity">
    <reaction>
        <text>xanthine + NAD(+) + H2O = urate + NADH + H(+)</text>
        <dbReference type="Rhea" id="RHEA:16669"/>
        <dbReference type="ChEBI" id="CHEBI:15377"/>
        <dbReference type="ChEBI" id="CHEBI:15378"/>
        <dbReference type="ChEBI" id="CHEBI:17712"/>
        <dbReference type="ChEBI" id="CHEBI:17775"/>
        <dbReference type="ChEBI" id="CHEBI:57540"/>
        <dbReference type="ChEBI" id="CHEBI:57945"/>
        <dbReference type="EC" id="1.17.1.4"/>
    </reaction>
</comment>
<comment type="catalytic activity">
    <reaction>
        <text>hypoxanthine + NAD(+) + H2O = xanthine + NADH + H(+)</text>
        <dbReference type="Rhea" id="RHEA:24670"/>
        <dbReference type="ChEBI" id="CHEBI:15377"/>
        <dbReference type="ChEBI" id="CHEBI:15378"/>
        <dbReference type="ChEBI" id="CHEBI:17368"/>
        <dbReference type="ChEBI" id="CHEBI:17712"/>
        <dbReference type="ChEBI" id="CHEBI:57540"/>
        <dbReference type="ChEBI" id="CHEBI:57945"/>
        <dbReference type="EC" id="1.17.1.4"/>
    </reaction>
</comment>
<comment type="cofactor">
    <cofactor evidence="1">
        <name>Mo-molybdopterin</name>
        <dbReference type="ChEBI" id="CHEBI:71302"/>
    </cofactor>
    <text evidence="1">Binds 1 Mo-molybdopterin (Mo-MPT) cofactor per subunit.</text>
</comment>
<comment type="pathway">
    <text>Purine metabolism; hypoxanthine degradation; urate from hypoxanthine: step 1/2.</text>
</comment>
<comment type="pathway">
    <text>Purine metabolism; hypoxanthine degradation; urate from hypoxanthine: step 2/2.</text>
</comment>
<comment type="subunit">
    <text>Could be composed of four subunits: PucA, PucC, PucD and PucE.</text>
</comment>
<comment type="induction">
    <text>Expression is very low in excess nitrogen (glutamate plus ammonia) and is induced during limiting-nitrogen conditions (glutamate). Expression decreases when allantoin is added during limiting-nitrogen conditions.</text>
</comment>
<comment type="similarity">
    <text evidence="4">Belongs to the xanthine dehydrogenase family.</text>
</comment>
<reference key="1">
    <citation type="journal article" date="1997" name="Nature">
        <title>The complete genome sequence of the Gram-positive bacterium Bacillus subtilis.</title>
        <authorList>
            <person name="Kunst F."/>
            <person name="Ogasawara N."/>
            <person name="Moszer I."/>
            <person name="Albertini A.M."/>
            <person name="Alloni G."/>
            <person name="Azevedo V."/>
            <person name="Bertero M.G."/>
            <person name="Bessieres P."/>
            <person name="Bolotin A."/>
            <person name="Borchert S."/>
            <person name="Borriss R."/>
            <person name="Boursier L."/>
            <person name="Brans A."/>
            <person name="Braun M."/>
            <person name="Brignell S.C."/>
            <person name="Bron S."/>
            <person name="Brouillet S."/>
            <person name="Bruschi C.V."/>
            <person name="Caldwell B."/>
            <person name="Capuano V."/>
            <person name="Carter N.M."/>
            <person name="Choi S.-K."/>
            <person name="Codani J.-J."/>
            <person name="Connerton I.F."/>
            <person name="Cummings N.J."/>
            <person name="Daniel R.A."/>
            <person name="Denizot F."/>
            <person name="Devine K.M."/>
            <person name="Duesterhoeft A."/>
            <person name="Ehrlich S.D."/>
            <person name="Emmerson P.T."/>
            <person name="Entian K.-D."/>
            <person name="Errington J."/>
            <person name="Fabret C."/>
            <person name="Ferrari E."/>
            <person name="Foulger D."/>
            <person name="Fritz C."/>
            <person name="Fujita M."/>
            <person name="Fujita Y."/>
            <person name="Fuma S."/>
            <person name="Galizzi A."/>
            <person name="Galleron N."/>
            <person name="Ghim S.-Y."/>
            <person name="Glaser P."/>
            <person name="Goffeau A."/>
            <person name="Golightly E.J."/>
            <person name="Grandi G."/>
            <person name="Guiseppi G."/>
            <person name="Guy B.J."/>
            <person name="Haga K."/>
            <person name="Haiech J."/>
            <person name="Harwood C.R."/>
            <person name="Henaut A."/>
            <person name="Hilbert H."/>
            <person name="Holsappel S."/>
            <person name="Hosono S."/>
            <person name="Hullo M.-F."/>
            <person name="Itaya M."/>
            <person name="Jones L.-M."/>
            <person name="Joris B."/>
            <person name="Karamata D."/>
            <person name="Kasahara Y."/>
            <person name="Klaerr-Blanchard M."/>
            <person name="Klein C."/>
            <person name="Kobayashi Y."/>
            <person name="Koetter P."/>
            <person name="Koningstein G."/>
            <person name="Krogh S."/>
            <person name="Kumano M."/>
            <person name="Kurita K."/>
            <person name="Lapidus A."/>
            <person name="Lardinois S."/>
            <person name="Lauber J."/>
            <person name="Lazarevic V."/>
            <person name="Lee S.-M."/>
            <person name="Levine A."/>
            <person name="Liu H."/>
            <person name="Masuda S."/>
            <person name="Mauel C."/>
            <person name="Medigue C."/>
            <person name="Medina N."/>
            <person name="Mellado R.P."/>
            <person name="Mizuno M."/>
            <person name="Moestl D."/>
            <person name="Nakai S."/>
            <person name="Noback M."/>
            <person name="Noone D."/>
            <person name="O'Reilly M."/>
            <person name="Ogawa K."/>
            <person name="Ogiwara A."/>
            <person name="Oudega B."/>
            <person name="Park S.-H."/>
            <person name="Parro V."/>
            <person name="Pohl T.M."/>
            <person name="Portetelle D."/>
            <person name="Porwollik S."/>
            <person name="Prescott A.M."/>
            <person name="Presecan E."/>
            <person name="Pujic P."/>
            <person name="Purnelle B."/>
            <person name="Rapoport G."/>
            <person name="Rey M."/>
            <person name="Reynolds S."/>
            <person name="Rieger M."/>
            <person name="Rivolta C."/>
            <person name="Rocha E."/>
            <person name="Roche B."/>
            <person name="Rose M."/>
            <person name="Sadaie Y."/>
            <person name="Sato T."/>
            <person name="Scanlan E."/>
            <person name="Schleich S."/>
            <person name="Schroeter R."/>
            <person name="Scoffone F."/>
            <person name="Sekiguchi J."/>
            <person name="Sekowska A."/>
            <person name="Seror S.J."/>
            <person name="Serror P."/>
            <person name="Shin B.-S."/>
            <person name="Soldo B."/>
            <person name="Sorokin A."/>
            <person name="Tacconi E."/>
            <person name="Takagi T."/>
            <person name="Takahashi H."/>
            <person name="Takemaru K."/>
            <person name="Takeuchi M."/>
            <person name="Tamakoshi A."/>
            <person name="Tanaka T."/>
            <person name="Terpstra P."/>
            <person name="Tognoni A."/>
            <person name="Tosato V."/>
            <person name="Uchiyama S."/>
            <person name="Vandenbol M."/>
            <person name="Vannier F."/>
            <person name="Vassarotti A."/>
            <person name="Viari A."/>
            <person name="Wambutt R."/>
            <person name="Wedler E."/>
            <person name="Wedler H."/>
            <person name="Weitzenegger T."/>
            <person name="Winters P."/>
            <person name="Wipat A."/>
            <person name="Yamamoto H."/>
            <person name="Yamane K."/>
            <person name="Yasumoto K."/>
            <person name="Yata K."/>
            <person name="Yoshida K."/>
            <person name="Yoshikawa H.-F."/>
            <person name="Zumstein E."/>
            <person name="Yoshikawa H."/>
            <person name="Danchin A."/>
        </authorList>
    </citation>
    <scope>NUCLEOTIDE SEQUENCE [LARGE SCALE GENOMIC DNA]</scope>
    <source>
        <strain>168</strain>
    </source>
</reference>
<reference key="2">
    <citation type="journal article" date="2001" name="J. Bacteriol.">
        <title>Functional analysis of 14 genes that constitute the purine catabolic pathway in Bacillus subtilis and evidence for a novel regulon controlled by the PucR transcription activator.</title>
        <authorList>
            <person name="Schultz A.C."/>
            <person name="Nygaard P."/>
            <person name="Saxild H.H."/>
        </authorList>
    </citation>
    <scope>FUNCTION</scope>
    <source>
        <strain>168</strain>
    </source>
</reference>
<dbReference type="EC" id="1.17.1.4"/>
<dbReference type="EMBL" id="AL009126">
    <property type="protein sequence ID" value="CAB15238.1"/>
    <property type="molecule type" value="Genomic_DNA"/>
</dbReference>
<dbReference type="PIR" id="B70017">
    <property type="entry name" value="B70017"/>
</dbReference>
<dbReference type="RefSeq" id="NP_391128.1">
    <property type="nucleotide sequence ID" value="NC_000964.3"/>
</dbReference>
<dbReference type="RefSeq" id="WP_003243174.1">
    <property type="nucleotide sequence ID" value="NZ_OZ025638.1"/>
</dbReference>
<dbReference type="SMR" id="O32144"/>
<dbReference type="FunCoup" id="O32144">
    <property type="interactions" value="275"/>
</dbReference>
<dbReference type="STRING" id="224308.BSU32480"/>
<dbReference type="PaxDb" id="224308-BSU32480"/>
<dbReference type="EnsemblBacteria" id="CAB15238">
    <property type="protein sequence ID" value="CAB15238"/>
    <property type="gene ID" value="BSU_32480"/>
</dbReference>
<dbReference type="GeneID" id="936686"/>
<dbReference type="KEGG" id="bsu:BSU32480"/>
<dbReference type="PATRIC" id="fig|224308.179.peg.3517"/>
<dbReference type="eggNOG" id="COG1529">
    <property type="taxonomic scope" value="Bacteria"/>
</dbReference>
<dbReference type="InParanoid" id="O32144"/>
<dbReference type="OrthoDB" id="9759099at2"/>
<dbReference type="PhylomeDB" id="O32144"/>
<dbReference type="BioCyc" id="BSUB:BSU32480-MONOMER"/>
<dbReference type="UniPathway" id="UPA00604">
    <property type="reaction ID" value="UER00661"/>
</dbReference>
<dbReference type="UniPathway" id="UPA00604">
    <property type="reaction ID" value="UER00662"/>
</dbReference>
<dbReference type="Proteomes" id="UP000001570">
    <property type="component" value="Chromosome"/>
</dbReference>
<dbReference type="GO" id="GO:0005506">
    <property type="term" value="F:iron ion binding"/>
    <property type="evidence" value="ECO:0007669"/>
    <property type="project" value="InterPro"/>
</dbReference>
<dbReference type="GO" id="GO:0016491">
    <property type="term" value="F:oxidoreductase activity"/>
    <property type="evidence" value="ECO:0000318"/>
    <property type="project" value="GO_Central"/>
</dbReference>
<dbReference type="GO" id="GO:0004854">
    <property type="term" value="F:xanthine dehydrogenase activity"/>
    <property type="evidence" value="ECO:0007669"/>
    <property type="project" value="UniProtKB-EC"/>
</dbReference>
<dbReference type="GO" id="GO:0009114">
    <property type="term" value="P:hypoxanthine catabolic process"/>
    <property type="evidence" value="ECO:0007669"/>
    <property type="project" value="UniProtKB-UniPathway"/>
</dbReference>
<dbReference type="Gene3D" id="3.90.1170.50">
    <property type="entry name" value="Aldehyde oxidase/xanthine dehydrogenase, a/b hammerhead"/>
    <property type="match status" value="1"/>
</dbReference>
<dbReference type="Gene3D" id="3.30.365.10">
    <property type="entry name" value="Aldehyde oxidase/xanthine dehydrogenase, molybdopterin binding domain"/>
    <property type="match status" value="4"/>
</dbReference>
<dbReference type="InterPro" id="IPR000674">
    <property type="entry name" value="Ald_Oxase/Xan_DH_a/b"/>
</dbReference>
<dbReference type="InterPro" id="IPR036856">
    <property type="entry name" value="Ald_Oxase/Xan_DH_a/b_sf"/>
</dbReference>
<dbReference type="InterPro" id="IPR016208">
    <property type="entry name" value="Ald_Oxase/xanthine_DH-like"/>
</dbReference>
<dbReference type="InterPro" id="IPR008274">
    <property type="entry name" value="AldOxase/xan_DH_MoCoBD1"/>
</dbReference>
<dbReference type="InterPro" id="IPR046867">
    <property type="entry name" value="AldOxase/xan_DH_MoCoBD2"/>
</dbReference>
<dbReference type="InterPro" id="IPR037165">
    <property type="entry name" value="AldOxase/xan_DH_Mopterin-bd_sf"/>
</dbReference>
<dbReference type="InterPro" id="IPR017609">
    <property type="entry name" value="Xanthine_dehydrogenase_dsu"/>
</dbReference>
<dbReference type="NCBIfam" id="TIGR03196">
    <property type="entry name" value="pucD"/>
    <property type="match status" value="1"/>
</dbReference>
<dbReference type="PANTHER" id="PTHR11908">
    <property type="entry name" value="XANTHINE DEHYDROGENASE"/>
    <property type="match status" value="1"/>
</dbReference>
<dbReference type="PANTHER" id="PTHR11908:SF157">
    <property type="entry name" value="XANTHINE DEHYDROGENASE SUBUNIT D-RELATED"/>
    <property type="match status" value="1"/>
</dbReference>
<dbReference type="Pfam" id="PF01315">
    <property type="entry name" value="Ald_Xan_dh_C"/>
    <property type="match status" value="1"/>
</dbReference>
<dbReference type="Pfam" id="PF02738">
    <property type="entry name" value="MoCoBD_1"/>
    <property type="match status" value="1"/>
</dbReference>
<dbReference type="Pfam" id="PF20256">
    <property type="entry name" value="MoCoBD_2"/>
    <property type="match status" value="1"/>
</dbReference>
<dbReference type="SMART" id="SM01008">
    <property type="entry name" value="Ald_Xan_dh_C"/>
    <property type="match status" value="1"/>
</dbReference>
<dbReference type="SUPFAM" id="SSF54665">
    <property type="entry name" value="CO dehydrogenase molybdoprotein N-domain-like"/>
    <property type="match status" value="1"/>
</dbReference>
<dbReference type="SUPFAM" id="SSF56003">
    <property type="entry name" value="Molybdenum cofactor-binding domain"/>
    <property type="match status" value="1"/>
</dbReference>
<evidence type="ECO:0000250" key="1"/>
<evidence type="ECO:0000255" key="2"/>
<evidence type="ECO:0000269" key="3">
    <source>
    </source>
</evidence>
<evidence type="ECO:0000305" key="4"/>
<feature type="chain" id="PRO_0000166098" description="Probable xanthine dehydrogenase subunit D">
    <location>
        <begin position="1"/>
        <end position="745"/>
    </location>
</feature>
<feature type="binding site" evidence="2">
    <location>
        <position position="204"/>
    </location>
    <ligand>
        <name>Mo-molybdopterin</name>
        <dbReference type="ChEBI" id="CHEBI:71302"/>
    </ligand>
    <ligandPart>
        <name>Mo</name>
        <dbReference type="ChEBI" id="CHEBI:28685"/>
    </ligandPart>
</feature>
<feature type="binding site" evidence="2">
    <location>
        <position position="235"/>
    </location>
    <ligand>
        <name>Mo-molybdopterin</name>
        <dbReference type="ChEBI" id="CHEBI:71302"/>
    </ligand>
    <ligandPart>
        <name>Mo</name>
        <dbReference type="ChEBI" id="CHEBI:28685"/>
    </ligandPart>
</feature>
<feature type="binding site" evidence="2">
    <location>
        <position position="508"/>
    </location>
    <ligand>
        <name>Mo-molybdopterin</name>
        <dbReference type="ChEBI" id="CHEBI:71302"/>
    </ligand>
    <ligandPart>
        <name>Mo</name>
        <dbReference type="ChEBI" id="CHEBI:28685"/>
    </ligandPart>
</feature>
<protein>
    <recommendedName>
        <fullName>Probable xanthine dehydrogenase subunit D</fullName>
        <shortName>XDHase subunit D</shortName>
        <ecNumber>1.17.1.4</ecNumber>
    </recommendedName>
</protein>
<organism>
    <name type="scientific">Bacillus subtilis (strain 168)</name>
    <dbReference type="NCBI Taxonomy" id="224308"/>
    <lineage>
        <taxon>Bacteria</taxon>
        <taxon>Bacillati</taxon>
        <taxon>Bacillota</taxon>
        <taxon>Bacilli</taxon>
        <taxon>Bacillales</taxon>
        <taxon>Bacillaceae</taxon>
        <taxon>Bacillus</taxon>
    </lineage>
</organism>
<sequence length="745" mass="80434">MIINKPSRVRPDGRGKVTGELKYMTDLSFPGMLYGKVLRSAYPHAEIVSVCTIKAEKMEGVQAVVTHKDVPGLNRFGIVIPDQPVLCEDRVRYVGDAIAAVAAETEEIAEAALELIQVEYKELEVMDSPEKALRPNAQRLHEDGNILHRAFFSNGDVEEGFQASDTVFEETYELPRQMHTYMETEGGVAVPEDDGGFTMYAGTQHGYKDRFQLARIFDIPEEKIRIVSSPMGGSFGGKDELNIQPYAALLALKSGRPVKIHQTRKESVRSGIKRHPMKITIKTGADHSGNLLAHDVKIVADTGAYATLGPAVLDFSVEHAAGPYRIPNIRTEGISVFTNNGVAGEFRGFGGNQITFALETHLDRLSGMLGIDPLELRRKNIRKPHDLGPLEHRIAPTDGAAQVLNAISKSPILKKTSRNCGYLQRGTGAAITMHGGGLGFGRMDAAGGRLSLSSEGKITASFGFEECGQGILAAIEQIVMEELGCAAEDISIVIGDTAKVPKSGSSTASRGTSMVWHAIQRLKKPFLAQLKKRAAEWSGCSAENLIPGAAGLRDKNTKALVVTYKELAEKGPLAEETAFDFPTTPDPVVGGHFLYSFGAAAVEVEVDLLTGDVKLIDCEHAIAAGPVVSPQGYRGQIEGGAAMALGYTLMEEAKMTDGRYAAENLDHYLIPGIKDVPDMKLIAIEDLMKGDVYGPRGVGEIGTIAITPAIVKAVHDAVGCWINKLPISREELLEAIDRKGLKQWT</sequence>
<name>XDHD_BACSU</name>